<protein>
    <recommendedName>
        <fullName>Uncharacterized hydrolase YNR064C</fullName>
        <ecNumber>3.1.-.-</ecNumber>
    </recommendedName>
</protein>
<gene>
    <name type="ordered locus">YNR064C</name>
    <name type="ORF">N3535</name>
</gene>
<dbReference type="EC" id="3.1.-.-"/>
<dbReference type="EMBL" id="Z71679">
    <property type="protein sequence ID" value="CAA96346.1"/>
    <property type="molecule type" value="Genomic_DNA"/>
</dbReference>
<dbReference type="EMBL" id="AY558017">
    <property type="protein sequence ID" value="AAS56343.1"/>
    <property type="molecule type" value="Genomic_DNA"/>
</dbReference>
<dbReference type="EMBL" id="BK006947">
    <property type="protein sequence ID" value="DAA10605.1"/>
    <property type="molecule type" value="Genomic_DNA"/>
</dbReference>
<dbReference type="PIR" id="S63396">
    <property type="entry name" value="S63396"/>
</dbReference>
<dbReference type="RefSeq" id="NP_014462.1">
    <property type="nucleotide sequence ID" value="NM_001183241.1"/>
</dbReference>
<dbReference type="SMR" id="P53750"/>
<dbReference type="BioGRID" id="35890">
    <property type="interactions" value="53"/>
</dbReference>
<dbReference type="DIP" id="DIP-5498N"/>
<dbReference type="FunCoup" id="P53750">
    <property type="interactions" value="1011"/>
</dbReference>
<dbReference type="IntAct" id="P53750">
    <property type="interactions" value="9"/>
</dbReference>
<dbReference type="MINT" id="P53750"/>
<dbReference type="STRING" id="4932.YNR064C"/>
<dbReference type="ESTHER" id="yeast-SCYNR064C">
    <property type="family name" value="6_AlphaBeta_hydrolase"/>
</dbReference>
<dbReference type="PaxDb" id="4932-YNR064C"/>
<dbReference type="PeptideAtlas" id="P53750"/>
<dbReference type="EnsemblFungi" id="YNR064C_mRNA">
    <property type="protein sequence ID" value="YNR064C"/>
    <property type="gene ID" value="YNR064C"/>
</dbReference>
<dbReference type="GeneID" id="855801"/>
<dbReference type="KEGG" id="sce:YNR064C"/>
<dbReference type="AGR" id="SGD:S000005347"/>
<dbReference type="SGD" id="S000005347">
    <property type="gene designation" value="YNR064C"/>
</dbReference>
<dbReference type="VEuPathDB" id="FungiDB:YNR064C"/>
<dbReference type="eggNOG" id="KOG4178">
    <property type="taxonomic scope" value="Eukaryota"/>
</dbReference>
<dbReference type="HOGENOM" id="CLU_020336_35_0_1"/>
<dbReference type="InParanoid" id="P53750"/>
<dbReference type="OMA" id="MYVMDYG"/>
<dbReference type="OrthoDB" id="284184at2759"/>
<dbReference type="BioCyc" id="YEAST:G3O-33368-MONOMER"/>
<dbReference type="BioGRID-ORCS" id="855801">
    <property type="hits" value="5 hits in 10 CRISPR screens"/>
</dbReference>
<dbReference type="PRO" id="PR:P53750"/>
<dbReference type="Proteomes" id="UP000002311">
    <property type="component" value="Chromosome XIV"/>
</dbReference>
<dbReference type="RNAct" id="P53750">
    <property type="molecule type" value="protein"/>
</dbReference>
<dbReference type="GO" id="GO:0052689">
    <property type="term" value="F:carboxylic ester hydrolase activity"/>
    <property type="evidence" value="ECO:0007669"/>
    <property type="project" value="UniProtKB-KW"/>
</dbReference>
<dbReference type="GO" id="GO:0004301">
    <property type="term" value="F:epoxide hydrolase activity"/>
    <property type="evidence" value="ECO:0000314"/>
    <property type="project" value="SGD"/>
</dbReference>
<dbReference type="GO" id="GO:0097176">
    <property type="term" value="P:epoxide metabolic process"/>
    <property type="evidence" value="ECO:0000314"/>
    <property type="project" value="SGD"/>
</dbReference>
<dbReference type="FunFam" id="3.40.50.1820:FF:000173">
    <property type="entry name" value="Alpha/beta hydrolase"/>
    <property type="match status" value="1"/>
</dbReference>
<dbReference type="Gene3D" id="3.40.50.1820">
    <property type="entry name" value="alpha/beta hydrolase"/>
    <property type="match status" value="1"/>
</dbReference>
<dbReference type="InterPro" id="IPR000073">
    <property type="entry name" value="AB_hydrolase_1"/>
</dbReference>
<dbReference type="InterPro" id="IPR029058">
    <property type="entry name" value="AB_hydrolase_fold"/>
</dbReference>
<dbReference type="InterPro" id="IPR051340">
    <property type="entry name" value="Haloalkane_dehalogenase"/>
</dbReference>
<dbReference type="PANTHER" id="PTHR42977:SF3">
    <property type="entry name" value="AB HYDROLASE-1 DOMAIN-CONTAINING PROTEIN"/>
    <property type="match status" value="1"/>
</dbReference>
<dbReference type="PANTHER" id="PTHR42977">
    <property type="entry name" value="HYDROLASE-RELATED"/>
    <property type="match status" value="1"/>
</dbReference>
<dbReference type="Pfam" id="PF00561">
    <property type="entry name" value="Abhydrolase_1"/>
    <property type="match status" value="1"/>
</dbReference>
<dbReference type="PRINTS" id="PR00111">
    <property type="entry name" value="ABHYDROLASE"/>
</dbReference>
<dbReference type="SUPFAM" id="SSF53474">
    <property type="entry name" value="alpha/beta-Hydrolases"/>
    <property type="match status" value="1"/>
</dbReference>
<proteinExistence type="inferred from homology"/>
<comment type="similarity">
    <text evidence="3">Belongs to the DmpD/TodF/XylF esterase family.</text>
</comment>
<name>YN93_YEAST</name>
<reference key="1">
    <citation type="journal article" date="1997" name="Nature">
        <title>The nucleotide sequence of Saccharomyces cerevisiae chromosome XIV and its evolutionary implications.</title>
        <authorList>
            <person name="Philippsen P."/>
            <person name="Kleine K."/>
            <person name="Poehlmann R."/>
            <person name="Duesterhoeft A."/>
            <person name="Hamberg K."/>
            <person name="Hegemann J.H."/>
            <person name="Obermaier B."/>
            <person name="Urrestarazu L.A."/>
            <person name="Aert R."/>
            <person name="Albermann K."/>
            <person name="Altmann R."/>
            <person name="Andre B."/>
            <person name="Baladron V."/>
            <person name="Ballesta J.P.G."/>
            <person name="Becam A.-M."/>
            <person name="Beinhauer J.D."/>
            <person name="Boskovic J."/>
            <person name="Buitrago M.J."/>
            <person name="Bussereau F."/>
            <person name="Coster F."/>
            <person name="Crouzet M."/>
            <person name="D'Angelo M."/>
            <person name="Dal Pero F."/>
            <person name="De Antoni A."/>
            <person name="del Rey F."/>
            <person name="Doignon F."/>
            <person name="Domdey H."/>
            <person name="Dubois E."/>
            <person name="Fiedler T.A."/>
            <person name="Fleig U."/>
            <person name="Floeth M."/>
            <person name="Fritz C."/>
            <person name="Gaillardin C."/>
            <person name="Garcia-Cantalejo J.M."/>
            <person name="Glansdorff N."/>
            <person name="Goffeau A."/>
            <person name="Gueldener U."/>
            <person name="Herbert C.J."/>
            <person name="Heumann K."/>
            <person name="Heuss-Neitzel D."/>
            <person name="Hilbert H."/>
            <person name="Hinni K."/>
            <person name="Iraqui Houssaini I."/>
            <person name="Jacquet M."/>
            <person name="Jimenez A."/>
            <person name="Jonniaux J.-L."/>
            <person name="Karpfinger-Hartl L."/>
            <person name="Lanfranchi G."/>
            <person name="Lepingle A."/>
            <person name="Levesque H."/>
            <person name="Lyck R."/>
            <person name="Maftahi M."/>
            <person name="Mallet L."/>
            <person name="Maurer C.T.C."/>
            <person name="Messenguy F."/>
            <person name="Mewes H.-W."/>
            <person name="Moestl D."/>
            <person name="Nasr F."/>
            <person name="Nicaud J.-M."/>
            <person name="Niedenthal R.K."/>
            <person name="Pandolfo D."/>
            <person name="Pierard A."/>
            <person name="Piravandi E."/>
            <person name="Planta R.J."/>
            <person name="Pohl T.M."/>
            <person name="Purnelle B."/>
            <person name="Rebischung C."/>
            <person name="Remacha M.A."/>
            <person name="Revuelta J.L."/>
            <person name="Rinke M."/>
            <person name="Saiz J.E."/>
            <person name="Sartorello F."/>
            <person name="Scherens B."/>
            <person name="Sen-Gupta M."/>
            <person name="Soler-Mira A."/>
            <person name="Urbanus J.H.M."/>
            <person name="Valle G."/>
            <person name="Van Dyck L."/>
            <person name="Verhasselt P."/>
            <person name="Vierendeels F."/>
            <person name="Vissers S."/>
            <person name="Voet M."/>
            <person name="Volckaert G."/>
            <person name="Wach A."/>
            <person name="Wambutt R."/>
            <person name="Wedler H."/>
            <person name="Zollner A."/>
            <person name="Hani J."/>
        </authorList>
    </citation>
    <scope>NUCLEOTIDE SEQUENCE [LARGE SCALE GENOMIC DNA]</scope>
    <source>
        <strain>ATCC 204508 / S288c</strain>
    </source>
</reference>
<reference key="2">
    <citation type="journal article" date="2014" name="G3 (Bethesda)">
        <title>The reference genome sequence of Saccharomyces cerevisiae: Then and now.</title>
        <authorList>
            <person name="Engel S.R."/>
            <person name="Dietrich F.S."/>
            <person name="Fisk D.G."/>
            <person name="Binkley G."/>
            <person name="Balakrishnan R."/>
            <person name="Costanzo M.C."/>
            <person name="Dwight S.S."/>
            <person name="Hitz B.C."/>
            <person name="Karra K."/>
            <person name="Nash R.S."/>
            <person name="Weng S."/>
            <person name="Wong E.D."/>
            <person name="Lloyd P."/>
            <person name="Skrzypek M.S."/>
            <person name="Miyasato S.R."/>
            <person name="Simison M."/>
            <person name="Cherry J.M."/>
        </authorList>
    </citation>
    <scope>GENOME REANNOTATION</scope>
    <source>
        <strain>ATCC 204508 / S288c</strain>
    </source>
</reference>
<reference key="3">
    <citation type="journal article" date="2007" name="Genome Res.">
        <title>Approaching a complete repository of sequence-verified protein-encoding clones for Saccharomyces cerevisiae.</title>
        <authorList>
            <person name="Hu Y."/>
            <person name="Rolfs A."/>
            <person name="Bhullar B."/>
            <person name="Murthy T.V.S."/>
            <person name="Zhu C."/>
            <person name="Berger M.F."/>
            <person name="Camargo A.A."/>
            <person name="Kelley F."/>
            <person name="McCarron S."/>
            <person name="Jepson D."/>
            <person name="Richardson A."/>
            <person name="Raphael J."/>
            <person name="Moreira D."/>
            <person name="Taycher E."/>
            <person name="Zuo D."/>
            <person name="Mohr S."/>
            <person name="Kane M.F."/>
            <person name="Williamson J."/>
            <person name="Simpson A.J.G."/>
            <person name="Bulyk M.L."/>
            <person name="Harlow E."/>
            <person name="Marsischky G."/>
            <person name="Kolodner R.D."/>
            <person name="LaBaer J."/>
        </authorList>
    </citation>
    <scope>NUCLEOTIDE SEQUENCE [GENOMIC DNA]</scope>
    <source>
        <strain>ATCC 204508 / S288c</strain>
    </source>
</reference>
<accession>P53750</accession>
<accession>D6W1N9</accession>
<keyword id="KW-0378">Hydrolase</keyword>
<keyword id="KW-1185">Reference proteome</keyword>
<keyword id="KW-0719">Serine esterase</keyword>
<evidence type="ECO:0000250" key="1"/>
<evidence type="ECO:0000255" key="2"/>
<evidence type="ECO:0000305" key="3"/>
<feature type="chain" id="PRO_0000207080" description="Uncharacterized hydrolase YNR064C">
    <location>
        <begin position="1"/>
        <end position="290"/>
    </location>
</feature>
<feature type="domain" description="AB hydrolase-1" evidence="2">
    <location>
        <begin position="30"/>
        <end position="274"/>
    </location>
</feature>
<feature type="active site" evidence="1">
    <location>
        <position position="269"/>
    </location>
</feature>
<sequence length="290" mass="32756">MSNIIARFHKIQVQDGVKVWYREAGAAGNPTILLLHGFPTSSNMFRNLIPLLAGQFHIIAPDLPGFGFTETPENYKFSFDSLCESIGYLLDTLSIEKFAMYIFDYGSPVGFRLALKFPSRITGIVTQNGNAYEEGLDDRFWGPLKEYWKSYQSDPVFVKSLIPYLEDPANVICQYHDGVPAIESVDPAAYTLDIALIQRTGQTDIQLRLFFDYQNNIKLYPAFQKFLRDSKIPVLVAWGANDTIFSVAGAEAYRKDVDNLKVVYYDTGHFALETHVVAIAEEIISMFAEN</sequence>
<organism>
    <name type="scientific">Saccharomyces cerevisiae (strain ATCC 204508 / S288c)</name>
    <name type="common">Baker's yeast</name>
    <dbReference type="NCBI Taxonomy" id="559292"/>
    <lineage>
        <taxon>Eukaryota</taxon>
        <taxon>Fungi</taxon>
        <taxon>Dikarya</taxon>
        <taxon>Ascomycota</taxon>
        <taxon>Saccharomycotina</taxon>
        <taxon>Saccharomycetes</taxon>
        <taxon>Saccharomycetales</taxon>
        <taxon>Saccharomycetaceae</taxon>
        <taxon>Saccharomyces</taxon>
    </lineage>
</organism>